<gene>
    <name type="ordered locus">BceJ2315_00090</name>
    <name type="ORF">BCAL0009</name>
</gene>
<dbReference type="EC" id="4.2.1.96" evidence="1"/>
<dbReference type="EMBL" id="AM747720">
    <property type="protein sequence ID" value="CAR50315.1"/>
    <property type="molecule type" value="Genomic_DNA"/>
</dbReference>
<dbReference type="RefSeq" id="WP_006486150.1">
    <property type="nucleotide sequence ID" value="NC_011000.1"/>
</dbReference>
<dbReference type="SMR" id="B4E566"/>
<dbReference type="KEGG" id="bcj:BCAL0009"/>
<dbReference type="eggNOG" id="COG2154">
    <property type="taxonomic scope" value="Bacteria"/>
</dbReference>
<dbReference type="HOGENOM" id="CLU_081974_3_2_4"/>
<dbReference type="BioCyc" id="BCEN216591:G1G1V-11-MONOMER"/>
<dbReference type="Proteomes" id="UP000001035">
    <property type="component" value="Chromosome 1"/>
</dbReference>
<dbReference type="GO" id="GO:0008124">
    <property type="term" value="F:4-alpha-hydroxytetrahydrobiopterin dehydratase activity"/>
    <property type="evidence" value="ECO:0007669"/>
    <property type="project" value="UniProtKB-UniRule"/>
</dbReference>
<dbReference type="GO" id="GO:0006729">
    <property type="term" value="P:tetrahydrobiopterin biosynthetic process"/>
    <property type="evidence" value="ECO:0007669"/>
    <property type="project" value="InterPro"/>
</dbReference>
<dbReference type="CDD" id="cd00914">
    <property type="entry name" value="PCD_DCoH_subfamily_b"/>
    <property type="match status" value="1"/>
</dbReference>
<dbReference type="Gene3D" id="3.30.1360.20">
    <property type="entry name" value="Transcriptional coactivator/pterin dehydratase"/>
    <property type="match status" value="1"/>
</dbReference>
<dbReference type="HAMAP" id="MF_00434">
    <property type="entry name" value="Pterin_4_alpha"/>
    <property type="match status" value="1"/>
</dbReference>
<dbReference type="InterPro" id="IPR036428">
    <property type="entry name" value="PCD_sf"/>
</dbReference>
<dbReference type="InterPro" id="IPR001533">
    <property type="entry name" value="Pterin_deHydtase"/>
</dbReference>
<dbReference type="NCBIfam" id="NF002017">
    <property type="entry name" value="PRK00823.1-2"/>
    <property type="match status" value="1"/>
</dbReference>
<dbReference type="NCBIfam" id="NF002018">
    <property type="entry name" value="PRK00823.1-3"/>
    <property type="match status" value="1"/>
</dbReference>
<dbReference type="NCBIfam" id="NF002020">
    <property type="entry name" value="PRK00823.1-5"/>
    <property type="match status" value="1"/>
</dbReference>
<dbReference type="PANTHER" id="PTHR12599">
    <property type="entry name" value="PTERIN-4-ALPHA-CARBINOLAMINE DEHYDRATASE"/>
    <property type="match status" value="1"/>
</dbReference>
<dbReference type="PANTHER" id="PTHR12599:SF0">
    <property type="entry name" value="PTERIN-4-ALPHA-CARBINOLAMINE DEHYDRATASE"/>
    <property type="match status" value="1"/>
</dbReference>
<dbReference type="Pfam" id="PF01329">
    <property type="entry name" value="Pterin_4a"/>
    <property type="match status" value="1"/>
</dbReference>
<dbReference type="SUPFAM" id="SSF55248">
    <property type="entry name" value="PCD-like"/>
    <property type="match status" value="1"/>
</dbReference>
<proteinExistence type="inferred from homology"/>
<organism>
    <name type="scientific">Burkholderia cenocepacia (strain ATCC BAA-245 / DSM 16553 / LMG 16656 / NCTC 13227 / J2315 / CF5610)</name>
    <name type="common">Burkholderia cepacia (strain J2315)</name>
    <dbReference type="NCBI Taxonomy" id="216591"/>
    <lineage>
        <taxon>Bacteria</taxon>
        <taxon>Pseudomonadati</taxon>
        <taxon>Pseudomonadota</taxon>
        <taxon>Betaproteobacteria</taxon>
        <taxon>Burkholderiales</taxon>
        <taxon>Burkholderiaceae</taxon>
        <taxon>Burkholderia</taxon>
        <taxon>Burkholderia cepacia complex</taxon>
    </lineage>
</organism>
<evidence type="ECO:0000255" key="1">
    <source>
        <dbReference type="HAMAP-Rule" id="MF_00434"/>
    </source>
</evidence>
<accession>B4E566</accession>
<protein>
    <recommendedName>
        <fullName evidence="1">Putative pterin-4-alpha-carbinolamine dehydratase</fullName>
        <shortName evidence="1">PHS</shortName>
        <ecNumber evidence="1">4.2.1.96</ecNumber>
    </recommendedName>
    <alternativeName>
        <fullName evidence="1">4-alpha-hydroxy-tetrahydropterin dehydratase</fullName>
    </alternativeName>
    <alternativeName>
        <fullName evidence="1">Pterin carbinolamine dehydratase</fullName>
        <shortName evidence="1">PCD</shortName>
    </alternativeName>
</protein>
<reference key="1">
    <citation type="journal article" date="2009" name="J. Bacteriol.">
        <title>The genome of Burkholderia cenocepacia J2315, an epidemic pathogen of cystic fibrosis patients.</title>
        <authorList>
            <person name="Holden M.T."/>
            <person name="Seth-Smith H.M."/>
            <person name="Crossman L.C."/>
            <person name="Sebaihia M."/>
            <person name="Bentley S.D."/>
            <person name="Cerdeno-Tarraga A.M."/>
            <person name="Thomson N.R."/>
            <person name="Bason N."/>
            <person name="Quail M.A."/>
            <person name="Sharp S."/>
            <person name="Cherevach I."/>
            <person name="Churcher C."/>
            <person name="Goodhead I."/>
            <person name="Hauser H."/>
            <person name="Holroyd N."/>
            <person name="Mungall K."/>
            <person name="Scott P."/>
            <person name="Walker D."/>
            <person name="White B."/>
            <person name="Rose H."/>
            <person name="Iversen P."/>
            <person name="Mil-Homens D."/>
            <person name="Rocha E.P."/>
            <person name="Fialho A.M."/>
            <person name="Baldwin A."/>
            <person name="Dowson C."/>
            <person name="Barrell B.G."/>
            <person name="Govan J.R."/>
            <person name="Vandamme P."/>
            <person name="Hart C.A."/>
            <person name="Mahenthiralingam E."/>
            <person name="Parkhill J."/>
        </authorList>
    </citation>
    <scope>NUCLEOTIDE SEQUENCE [LARGE SCALE GENOMIC DNA]</scope>
    <source>
        <strain>ATCC BAA-245 / DSM 16553 / LMG 16656 / NCTC 13227 / J2315 / CF5610</strain>
    </source>
</reference>
<keyword id="KW-0456">Lyase</keyword>
<comment type="catalytic activity">
    <reaction evidence="1">
        <text>(4aS,6R)-4a-hydroxy-L-erythro-5,6,7,8-tetrahydrobiopterin = (6R)-L-erythro-6,7-dihydrobiopterin + H2O</text>
        <dbReference type="Rhea" id="RHEA:11920"/>
        <dbReference type="ChEBI" id="CHEBI:15377"/>
        <dbReference type="ChEBI" id="CHEBI:15642"/>
        <dbReference type="ChEBI" id="CHEBI:43120"/>
        <dbReference type="EC" id="4.2.1.96"/>
    </reaction>
</comment>
<comment type="similarity">
    <text evidence="1">Belongs to the pterin-4-alpha-carbinolamine dehydratase family.</text>
</comment>
<name>PHS_BURCJ</name>
<feature type="chain" id="PRO_1000192911" description="Putative pterin-4-alpha-carbinolamine dehydratase">
    <location>
        <begin position="1"/>
        <end position="102"/>
    </location>
</feature>
<sequence length="102" mass="11699">MIHKLTSEERKTRLEGLPHWTAVPGRDAIQRRLRFADFNEAFGFMTRVAIKAQEMNHHPEWFNVYNRVDVTLSTHDADGLTERDIELARFIDGAATHAQPGA</sequence>